<gene>
    <name evidence="1" type="primary">Mocs2</name>
    <name type="ORF">CPIJ013435</name>
</gene>
<comment type="function">
    <text evidence="1">Catalytic subunit of the molybdopterin synthase complex, a complex that catalyzes the conversion of precursor Z into molybdopterin. Acts by mediating the incorporation of 2 sulfur atoms from thiocarboxylated MOCS2A into precursor Z to generate a dithiolene group.</text>
</comment>
<comment type="catalytic activity">
    <reaction evidence="1">
        <text>2 [molybdopterin-synthase sulfur-carrier protein]-C-terminal-Gly-aminoethanethioate + cyclic pyranopterin phosphate + H2O = molybdopterin + 2 [molybdopterin-synthase sulfur-carrier protein]-C-terminal Gly-Gly + 2 H(+)</text>
        <dbReference type="Rhea" id="RHEA:26333"/>
        <dbReference type="Rhea" id="RHEA-COMP:12202"/>
        <dbReference type="Rhea" id="RHEA-COMP:19907"/>
        <dbReference type="ChEBI" id="CHEBI:15377"/>
        <dbReference type="ChEBI" id="CHEBI:15378"/>
        <dbReference type="ChEBI" id="CHEBI:58698"/>
        <dbReference type="ChEBI" id="CHEBI:59648"/>
        <dbReference type="ChEBI" id="CHEBI:90778"/>
        <dbReference type="ChEBI" id="CHEBI:232372"/>
        <dbReference type="EC" id="2.8.1.12"/>
    </reaction>
</comment>
<comment type="pathway">
    <text evidence="1">Cofactor biosynthesis; molybdopterin biosynthesis.</text>
</comment>
<comment type="subunit">
    <text evidence="1">Heterotetramer; composed of 2 small (MOCS2A) and 2 large (MOCS2B) subunits.</text>
</comment>
<comment type="subcellular location">
    <subcellularLocation>
        <location evidence="1">Cytoplasm</location>
    </subcellularLocation>
</comment>
<comment type="miscellaneous">
    <text>This protein is produced by a bicistronic gene which also produces the large subunit (MOCS2A).</text>
</comment>
<comment type="similarity">
    <text evidence="1">Belongs to the MoaE family. MOCS2B subfamily.</text>
</comment>
<comment type="sequence caution" evidence="2">
    <conflict type="erroneous gene model prediction">
        <sequence resource="EMBL-CDS" id="EDS38833"/>
    </conflict>
</comment>
<reference key="1">
    <citation type="submission" date="2007-03" db="EMBL/GenBank/DDBJ databases">
        <title>Annotation of Culex pipiens quinquefasciatus.</title>
        <authorList>
            <consortium name="The Broad Institute Genome Sequencing Platform"/>
            <person name="Atkinson P.W."/>
            <person name="Hemingway J."/>
            <person name="Christensen B.M."/>
            <person name="Higgs S."/>
            <person name="Kodira C.D."/>
            <person name="Hannick L.I."/>
            <person name="Megy K."/>
            <person name="O'Leary S.B."/>
            <person name="Pearson M."/>
            <person name="Haas B.J."/>
            <person name="Mauceli E."/>
            <person name="Wortman J.R."/>
            <person name="Lee N.H."/>
            <person name="Guigo R."/>
            <person name="Stanke M."/>
            <person name="Alvarado L."/>
            <person name="Amedeo P."/>
            <person name="Antoine C.H."/>
            <person name="Arensburger P."/>
            <person name="Bidwell S.L."/>
            <person name="Crawford M."/>
            <person name="Camaro F."/>
            <person name="Devon K."/>
            <person name="Engels R."/>
            <person name="Hammond M."/>
            <person name="Howarth C."/>
            <person name="Koehrsen M."/>
            <person name="Lawson D."/>
            <person name="Montgomery P."/>
            <person name="Nene V."/>
            <person name="Nusbaum C."/>
            <person name="Puiu D."/>
            <person name="Romero-Severson J."/>
            <person name="Severson D.W."/>
            <person name="Shumway M."/>
            <person name="Sisk P."/>
            <person name="Stolte C."/>
            <person name="Zeng Q."/>
            <person name="Eisenstadt E."/>
            <person name="Fraser-Liggett C.M."/>
            <person name="Strausberg R."/>
            <person name="Galagan J."/>
            <person name="Birren B."/>
            <person name="Collins F.H."/>
        </authorList>
    </citation>
    <scope>NUCLEOTIDE SEQUENCE [LARGE SCALE GENOMIC DNA]</scope>
    <source>
        <strain>JHB</strain>
    </source>
</reference>
<accession>B0X1V5</accession>
<sequence length="157" mass="17770">MGSNYLKLTFDKLDVGEINELVAHESCGAVALFVGTTRDNFDGKEVVLLQYEAYEAMALKSMNHICEELRGRWTDLVHIGIHHRLGTVPVKEASVVIAISSPHREAALEAVRWAIDELKKSVPVWKKEQYAEGQGCSEWKENKECTWSKAYKDNHIL</sequence>
<dbReference type="EC" id="2.8.1.12" evidence="1"/>
<dbReference type="EMBL" id="DS232271">
    <property type="protein sequence ID" value="EDS38833.1"/>
    <property type="status" value="ALT_SEQ"/>
    <property type="molecule type" value="Genomic_DNA"/>
</dbReference>
<dbReference type="RefSeq" id="XP_001863627.1">
    <property type="nucleotide sequence ID" value="XM_001863592.1"/>
</dbReference>
<dbReference type="SMR" id="B0X1V5"/>
<dbReference type="STRING" id="7176.B0X1V5"/>
<dbReference type="EnsemblMetazoa" id="CQUJHB006686.R10284">
    <property type="protein sequence ID" value="CQUJHB006686.P10284"/>
    <property type="gene ID" value="CQUJHB006686"/>
</dbReference>
<dbReference type="EnsemblMetazoa" id="XM_038249040.1">
    <property type="protein sequence ID" value="XP_038104968.1"/>
    <property type="gene ID" value="LOC119765342"/>
</dbReference>
<dbReference type="GeneID" id="6046412"/>
<dbReference type="KEGG" id="cqu:CpipJ_CPIJ013435"/>
<dbReference type="CTD" id="8674021"/>
<dbReference type="VEuPathDB" id="VectorBase:CPIJ013435"/>
<dbReference type="VEuPathDB" id="VectorBase:CQUJHB006686"/>
<dbReference type="eggNOG" id="KOG3307">
    <property type="taxonomic scope" value="Eukaryota"/>
</dbReference>
<dbReference type="HOGENOM" id="CLU_089568_0_1_1"/>
<dbReference type="InParanoid" id="B0X1V5"/>
<dbReference type="OrthoDB" id="5531344at2759"/>
<dbReference type="UniPathway" id="UPA00344"/>
<dbReference type="Proteomes" id="UP000002320">
    <property type="component" value="Unassembled WGS sequence"/>
</dbReference>
<dbReference type="GO" id="GO:1990140">
    <property type="term" value="C:molybdopterin synthase complex"/>
    <property type="evidence" value="ECO:0000250"/>
    <property type="project" value="UniProtKB"/>
</dbReference>
<dbReference type="GO" id="GO:0030366">
    <property type="term" value="F:molybdopterin synthase activity"/>
    <property type="evidence" value="ECO:0007669"/>
    <property type="project" value="UniProtKB-UniRule"/>
</dbReference>
<dbReference type="GO" id="GO:0006777">
    <property type="term" value="P:Mo-molybdopterin cofactor biosynthetic process"/>
    <property type="evidence" value="ECO:0000250"/>
    <property type="project" value="UniProtKB"/>
</dbReference>
<dbReference type="CDD" id="cd00756">
    <property type="entry name" value="MoaE"/>
    <property type="match status" value="1"/>
</dbReference>
<dbReference type="FunFam" id="3.90.1170.40:FF:000002">
    <property type="entry name" value="Molybdopterin synthase catalytic subunit"/>
    <property type="match status" value="1"/>
</dbReference>
<dbReference type="Gene3D" id="3.90.1170.40">
    <property type="entry name" value="Molybdopterin biosynthesis MoaE subunit"/>
    <property type="match status" value="1"/>
</dbReference>
<dbReference type="HAMAP" id="MF_03052">
    <property type="entry name" value="MOC2B"/>
    <property type="match status" value="1"/>
</dbReference>
<dbReference type="InterPro" id="IPR036563">
    <property type="entry name" value="MoaE_sf"/>
</dbReference>
<dbReference type="InterPro" id="IPR028888">
    <property type="entry name" value="MOCS2B_euk"/>
</dbReference>
<dbReference type="InterPro" id="IPR003448">
    <property type="entry name" value="Mopterin_biosynth_MoaE"/>
</dbReference>
<dbReference type="PANTHER" id="PTHR23404">
    <property type="entry name" value="MOLYBDOPTERIN SYNTHASE RELATED"/>
    <property type="match status" value="1"/>
</dbReference>
<dbReference type="Pfam" id="PF02391">
    <property type="entry name" value="MoaE"/>
    <property type="match status" value="1"/>
</dbReference>
<dbReference type="SUPFAM" id="SSF54690">
    <property type="entry name" value="Molybdopterin synthase subunit MoaE"/>
    <property type="match status" value="1"/>
</dbReference>
<name>MOC2B_CULQU</name>
<evidence type="ECO:0000255" key="1">
    <source>
        <dbReference type="HAMAP-Rule" id="MF_03052"/>
    </source>
</evidence>
<evidence type="ECO:0000305" key="2"/>
<organism>
    <name type="scientific">Culex quinquefasciatus</name>
    <name type="common">Southern house mosquito</name>
    <name type="synonym">Culex pungens</name>
    <dbReference type="NCBI Taxonomy" id="7176"/>
    <lineage>
        <taxon>Eukaryota</taxon>
        <taxon>Metazoa</taxon>
        <taxon>Ecdysozoa</taxon>
        <taxon>Arthropoda</taxon>
        <taxon>Hexapoda</taxon>
        <taxon>Insecta</taxon>
        <taxon>Pterygota</taxon>
        <taxon>Neoptera</taxon>
        <taxon>Endopterygota</taxon>
        <taxon>Diptera</taxon>
        <taxon>Nematocera</taxon>
        <taxon>Culicoidea</taxon>
        <taxon>Culicidae</taxon>
        <taxon>Culicinae</taxon>
        <taxon>Culicini</taxon>
        <taxon>Culex</taxon>
        <taxon>Culex</taxon>
    </lineage>
</organism>
<keyword id="KW-0963">Cytoplasm</keyword>
<keyword id="KW-0501">Molybdenum cofactor biosynthesis</keyword>
<keyword id="KW-1185">Reference proteome</keyword>
<keyword id="KW-0808">Transferase</keyword>
<feature type="chain" id="PRO_0000369332" description="Molybdopterin synthase catalytic subunit">
    <location>
        <begin position="1"/>
        <end position="157"/>
    </location>
</feature>
<feature type="binding site" evidence="1">
    <location>
        <begin position="103"/>
        <end position="104"/>
    </location>
    <ligand>
        <name>substrate</name>
    </ligand>
</feature>
<feature type="binding site" evidence="1">
    <location>
        <position position="119"/>
    </location>
    <ligand>
        <name>substrate</name>
    </ligand>
</feature>
<feature type="binding site" evidence="1">
    <location>
        <begin position="126"/>
        <end position="128"/>
    </location>
    <ligand>
        <name>substrate</name>
    </ligand>
</feature>
<protein>
    <recommendedName>
        <fullName evidence="1">Molybdopterin synthase catalytic subunit</fullName>
        <ecNumber evidence="1">2.8.1.12</ecNumber>
    </recommendedName>
    <alternativeName>
        <fullName evidence="1">Molybdenum cofactor synthesis protein 2 large subunit</fullName>
    </alternativeName>
    <alternativeName>
        <fullName evidence="1">Molybdenum cofactor synthesis protein 2B</fullName>
        <shortName evidence="1">MOCS2B</shortName>
    </alternativeName>
</protein>
<proteinExistence type="inferred from homology"/>